<name>ENO4_DANRE</name>
<reference key="1">
    <citation type="submission" date="2006-10" db="EMBL/GenBank/DDBJ databases">
        <authorList>
            <consortium name="NIH - Zebrafish Gene Collection (ZGC) project"/>
        </authorList>
    </citation>
    <scope>NUCLEOTIDE SEQUENCE [LARGE SCALE MRNA]</scope>
</reference>
<protein>
    <recommendedName>
        <fullName>Enolase 4</fullName>
        <ecNumber evidence="2">4.2.1.11</ecNumber>
    </recommendedName>
    <alternativeName>
        <fullName>2-phospho-D-glycerate hydro-lyase</fullName>
    </alternativeName>
</protein>
<accession>Q08BC6</accession>
<gene>
    <name type="primary">eno4</name>
    <name type="ORF">zgc:153973</name>
</gene>
<sequence>MSYKGFPSHSKVSKEDQEFYDLKNKAAEYYRSNGVPQKIESVLNEMFWQKPDDIYGYLANYFSGLSYTPVISKITGKEVFDGRGLTAVQAEVHCIIRNEEKMVCGAVMDGSFDGLPDGVESGEMLSNGDLQHLSITMALKWIRENFSPVLRGFNPTDQTNVDKILSDFAMARYLEHKDSLIREKEEELRNEAMSEAPPQATPTSAPAKDKKGNDKGKKGNITENPLPPAEPPVPRLPGATAVGAVSLAVAKTAAELLGTPLYRHITAVRDPQAQKEMQLPVPIITIMSCGKNSAGKLNLLEEIILMPSSSLRVREVIGMGLDLQCEMRRILNGSTYKALPVGVSDEGALQVGFDRPEQALDLLAEACANLALPLGSDLHLAVNCAAHSLMDYSRGKYEVMSGCHKSPDELVDIYEGLINKYPAIRSLIDPFRKEDVGQWERLASVIGQSCCLLADAASNLCPRWREAKPLPPGATKAIIRHHSDMTISDLIQSIAEHKETILAAGSGDASMVDLAVGSGVSFLKLGGLRGAKRMDKYNRLMAIEEEQEGIAGAGEINQPVSFESESGWNSLTVSAK</sequence>
<comment type="catalytic activity">
    <reaction evidence="2">
        <text>(2R)-2-phosphoglycerate = phosphoenolpyruvate + H2O</text>
        <dbReference type="Rhea" id="RHEA:10164"/>
        <dbReference type="ChEBI" id="CHEBI:15377"/>
        <dbReference type="ChEBI" id="CHEBI:58289"/>
        <dbReference type="ChEBI" id="CHEBI:58702"/>
        <dbReference type="EC" id="4.2.1.11"/>
    </reaction>
</comment>
<comment type="pathway">
    <text evidence="2">Carbohydrate degradation; glycolysis; pyruvate from D-glyceraldehyde 3-phosphate: step 4/5.</text>
</comment>
<comment type="similarity">
    <text evidence="4">Belongs to the enolase family.</text>
</comment>
<comment type="caution">
    <text evidence="4">Although it is highly related to enolase enzyme family, lacks the conserved Glu active site.</text>
</comment>
<evidence type="ECO:0000250" key="1"/>
<evidence type="ECO:0000250" key="2">
    <source>
        <dbReference type="UniProtKB" id="Q8C042"/>
    </source>
</evidence>
<evidence type="ECO:0000256" key="3">
    <source>
        <dbReference type="SAM" id="MobiDB-lite"/>
    </source>
</evidence>
<evidence type="ECO:0000305" key="4"/>
<proteinExistence type="evidence at transcript level"/>
<dbReference type="EC" id="4.2.1.11" evidence="2"/>
<dbReference type="EMBL" id="BC124782">
    <property type="protein sequence ID" value="AAI24783.1"/>
    <property type="molecule type" value="mRNA"/>
</dbReference>
<dbReference type="RefSeq" id="NP_001071015.1">
    <property type="nucleotide sequence ID" value="NM_001077547.1"/>
</dbReference>
<dbReference type="SMR" id="Q08BC6"/>
<dbReference type="FunCoup" id="Q08BC6">
    <property type="interactions" value="1367"/>
</dbReference>
<dbReference type="STRING" id="7955.ENSDARP00000094621"/>
<dbReference type="PaxDb" id="7955-ENSDARP00000094621"/>
<dbReference type="GeneID" id="558487"/>
<dbReference type="KEGG" id="dre:558487"/>
<dbReference type="AGR" id="ZFIN:ZDB-GENE-061013-677"/>
<dbReference type="CTD" id="387712"/>
<dbReference type="ZFIN" id="ZDB-GENE-061013-677">
    <property type="gene designation" value="eno4"/>
</dbReference>
<dbReference type="eggNOG" id="KOG2670">
    <property type="taxonomic scope" value="Eukaryota"/>
</dbReference>
<dbReference type="InParanoid" id="Q08BC6"/>
<dbReference type="OrthoDB" id="10009078at2759"/>
<dbReference type="PhylomeDB" id="Q08BC6"/>
<dbReference type="Reactome" id="R-DRE-70171">
    <property type="pathway name" value="Glycolysis"/>
</dbReference>
<dbReference type="Reactome" id="R-DRE-70263">
    <property type="pathway name" value="Gluconeogenesis"/>
</dbReference>
<dbReference type="UniPathway" id="UPA00109">
    <property type="reaction ID" value="UER00187"/>
</dbReference>
<dbReference type="PRO" id="PR:Q08BC6"/>
<dbReference type="Proteomes" id="UP000000437">
    <property type="component" value="Chromosome 17"/>
</dbReference>
<dbReference type="GO" id="GO:0000015">
    <property type="term" value="C:phosphopyruvate hydratase complex"/>
    <property type="evidence" value="ECO:0000318"/>
    <property type="project" value="GO_Central"/>
</dbReference>
<dbReference type="GO" id="GO:0000287">
    <property type="term" value="F:magnesium ion binding"/>
    <property type="evidence" value="ECO:0007669"/>
    <property type="project" value="InterPro"/>
</dbReference>
<dbReference type="GO" id="GO:0004634">
    <property type="term" value="F:phosphopyruvate hydratase activity"/>
    <property type="evidence" value="ECO:0000318"/>
    <property type="project" value="GO_Central"/>
</dbReference>
<dbReference type="GO" id="GO:0006096">
    <property type="term" value="P:glycolytic process"/>
    <property type="evidence" value="ECO:0000318"/>
    <property type="project" value="GO_Central"/>
</dbReference>
<dbReference type="CDD" id="cd22974">
    <property type="entry name" value="DD_ENO4"/>
    <property type="match status" value="1"/>
</dbReference>
<dbReference type="Gene3D" id="3.20.20.120">
    <property type="entry name" value="Enolase-like C-terminal domain"/>
    <property type="match status" value="1"/>
</dbReference>
<dbReference type="Gene3D" id="3.30.390.10">
    <property type="entry name" value="Enolase-like, N-terminal domain"/>
    <property type="match status" value="1"/>
</dbReference>
<dbReference type="InterPro" id="IPR047500">
    <property type="entry name" value="DD_ENO4"/>
</dbReference>
<dbReference type="InterPro" id="IPR000941">
    <property type="entry name" value="Enolase"/>
</dbReference>
<dbReference type="InterPro" id="IPR036849">
    <property type="entry name" value="Enolase-like_C_sf"/>
</dbReference>
<dbReference type="InterPro" id="IPR029017">
    <property type="entry name" value="Enolase-like_N"/>
</dbReference>
<dbReference type="InterPro" id="IPR020810">
    <property type="entry name" value="Enolase_C"/>
</dbReference>
<dbReference type="InterPro" id="IPR020811">
    <property type="entry name" value="Enolase_N"/>
</dbReference>
<dbReference type="PANTHER" id="PTHR11902">
    <property type="entry name" value="ENOLASE"/>
    <property type="match status" value="1"/>
</dbReference>
<dbReference type="PANTHER" id="PTHR11902:SF30">
    <property type="entry name" value="ENOLASE 4"/>
    <property type="match status" value="1"/>
</dbReference>
<dbReference type="Pfam" id="PF00113">
    <property type="entry name" value="Enolase_C"/>
    <property type="match status" value="1"/>
</dbReference>
<dbReference type="SMART" id="SM01192">
    <property type="entry name" value="Enolase_C"/>
    <property type="match status" value="1"/>
</dbReference>
<dbReference type="SMART" id="SM01193">
    <property type="entry name" value="Enolase_N"/>
    <property type="match status" value="1"/>
</dbReference>
<dbReference type="SUPFAM" id="SSF51604">
    <property type="entry name" value="Enolase C-terminal domain-like"/>
    <property type="match status" value="1"/>
</dbReference>
<dbReference type="SUPFAM" id="SSF54826">
    <property type="entry name" value="Enolase N-terminal domain-like"/>
    <property type="match status" value="1"/>
</dbReference>
<keyword id="KW-0324">Glycolysis</keyword>
<keyword id="KW-0456">Lyase</keyword>
<keyword id="KW-1185">Reference proteome</keyword>
<organism>
    <name type="scientific">Danio rerio</name>
    <name type="common">Zebrafish</name>
    <name type="synonym">Brachydanio rerio</name>
    <dbReference type="NCBI Taxonomy" id="7955"/>
    <lineage>
        <taxon>Eukaryota</taxon>
        <taxon>Metazoa</taxon>
        <taxon>Chordata</taxon>
        <taxon>Craniata</taxon>
        <taxon>Vertebrata</taxon>
        <taxon>Euteleostomi</taxon>
        <taxon>Actinopterygii</taxon>
        <taxon>Neopterygii</taxon>
        <taxon>Teleostei</taxon>
        <taxon>Ostariophysi</taxon>
        <taxon>Cypriniformes</taxon>
        <taxon>Danionidae</taxon>
        <taxon>Danioninae</taxon>
        <taxon>Danio</taxon>
    </lineage>
</organism>
<feature type="chain" id="PRO_0000348456" description="Enolase 4">
    <location>
        <begin position="1"/>
        <end position="576"/>
    </location>
</feature>
<feature type="region of interest" description="Disordered" evidence="3">
    <location>
        <begin position="187"/>
        <end position="232"/>
    </location>
</feature>
<feature type="compositionally biased region" description="Low complexity" evidence="3">
    <location>
        <begin position="196"/>
        <end position="206"/>
    </location>
</feature>
<feature type="compositionally biased region" description="Basic and acidic residues" evidence="3">
    <location>
        <begin position="207"/>
        <end position="217"/>
    </location>
</feature>
<feature type="binding site" evidence="1">
    <location>
        <position position="302"/>
    </location>
    <ligand>
        <name>substrate</name>
    </ligand>
</feature>
<feature type="binding site" evidence="1">
    <location>
        <position position="524"/>
    </location>
    <ligand>
        <name>substrate</name>
    </ligand>
</feature>